<reference key="1">
    <citation type="journal article" date="2008" name="PLoS ONE">
        <title>Comparative analysis of Acinetobacters: three genomes for three lifestyles.</title>
        <authorList>
            <person name="Vallenet D."/>
            <person name="Nordmann P."/>
            <person name="Barbe V."/>
            <person name="Poirel L."/>
            <person name="Mangenot S."/>
            <person name="Bataille E."/>
            <person name="Dossat C."/>
            <person name="Gas S."/>
            <person name="Kreimeyer A."/>
            <person name="Lenoble P."/>
            <person name="Oztas S."/>
            <person name="Poulain J."/>
            <person name="Segurens B."/>
            <person name="Robert C."/>
            <person name="Abergel C."/>
            <person name="Claverie J.-M."/>
            <person name="Raoult D."/>
            <person name="Medigue C."/>
            <person name="Weissenbach J."/>
            <person name="Cruveiller S."/>
        </authorList>
    </citation>
    <scope>NUCLEOTIDE SEQUENCE [LARGE SCALE GENOMIC DNA]</scope>
    <source>
        <strain>AYE</strain>
    </source>
</reference>
<accession>B0VE46</accession>
<protein>
    <recommendedName>
        <fullName evidence="1">3-ketoacyl-CoA thiolase</fullName>
        <ecNumber evidence="1">2.3.1.16</ecNumber>
    </recommendedName>
    <alternativeName>
        <fullName evidence="1">Acetyl-CoA acyltransferase</fullName>
    </alternativeName>
    <alternativeName>
        <fullName evidence="1">Beta-ketothiolase</fullName>
    </alternativeName>
    <alternativeName>
        <fullName evidence="1">Fatty acid oxidation complex subunit beta</fullName>
    </alternativeName>
</protein>
<proteinExistence type="inferred from homology"/>
<organism>
    <name type="scientific">Acinetobacter baumannii (strain AYE)</name>
    <dbReference type="NCBI Taxonomy" id="509173"/>
    <lineage>
        <taxon>Bacteria</taxon>
        <taxon>Pseudomonadati</taxon>
        <taxon>Pseudomonadota</taxon>
        <taxon>Gammaproteobacteria</taxon>
        <taxon>Moraxellales</taxon>
        <taxon>Moraxellaceae</taxon>
        <taxon>Acinetobacter</taxon>
        <taxon>Acinetobacter calcoaceticus/baumannii complex</taxon>
    </lineage>
</organism>
<gene>
    <name evidence="1" type="primary">fadA</name>
    <name type="ordered locus">ABAYE3471</name>
</gene>
<feature type="chain" id="PRO_1000186021" description="3-ketoacyl-CoA thiolase">
    <location>
        <begin position="1"/>
        <end position="390"/>
    </location>
</feature>
<feature type="active site" description="Acyl-thioester intermediate" evidence="1">
    <location>
        <position position="95"/>
    </location>
</feature>
<feature type="active site" description="Proton acceptor" evidence="1">
    <location>
        <position position="346"/>
    </location>
</feature>
<feature type="active site" description="Proton acceptor" evidence="1">
    <location>
        <position position="376"/>
    </location>
</feature>
<dbReference type="EC" id="2.3.1.16" evidence="1"/>
<dbReference type="EMBL" id="CU459141">
    <property type="protein sequence ID" value="CAM88260.1"/>
    <property type="molecule type" value="Genomic_DNA"/>
</dbReference>
<dbReference type="RefSeq" id="WP_000212712.1">
    <property type="nucleotide sequence ID" value="NZ_JBDGFB010000003.1"/>
</dbReference>
<dbReference type="SMR" id="B0VE46"/>
<dbReference type="EnsemblBacteria" id="CAM88260">
    <property type="protein sequence ID" value="CAM88260"/>
    <property type="gene ID" value="ABAYE3471"/>
</dbReference>
<dbReference type="GeneID" id="92892301"/>
<dbReference type="KEGG" id="aby:ABAYE3471"/>
<dbReference type="HOGENOM" id="CLU_031026_2_2_6"/>
<dbReference type="UniPathway" id="UPA00659"/>
<dbReference type="GO" id="GO:0005737">
    <property type="term" value="C:cytoplasm"/>
    <property type="evidence" value="ECO:0007669"/>
    <property type="project" value="UniProtKB-SubCell"/>
</dbReference>
<dbReference type="GO" id="GO:0003988">
    <property type="term" value="F:acetyl-CoA C-acyltransferase activity"/>
    <property type="evidence" value="ECO:0007669"/>
    <property type="project" value="UniProtKB-UniRule"/>
</dbReference>
<dbReference type="GO" id="GO:0006635">
    <property type="term" value="P:fatty acid beta-oxidation"/>
    <property type="evidence" value="ECO:0007669"/>
    <property type="project" value="UniProtKB-UniRule"/>
</dbReference>
<dbReference type="GO" id="GO:0010124">
    <property type="term" value="P:phenylacetate catabolic process"/>
    <property type="evidence" value="ECO:0007669"/>
    <property type="project" value="TreeGrafter"/>
</dbReference>
<dbReference type="CDD" id="cd00751">
    <property type="entry name" value="thiolase"/>
    <property type="match status" value="1"/>
</dbReference>
<dbReference type="FunFam" id="3.40.47.10:FF:000010">
    <property type="entry name" value="Acetyl-CoA acetyltransferase (Thiolase)"/>
    <property type="match status" value="1"/>
</dbReference>
<dbReference type="Gene3D" id="3.40.47.10">
    <property type="match status" value="2"/>
</dbReference>
<dbReference type="HAMAP" id="MF_01620">
    <property type="entry name" value="FadA"/>
    <property type="match status" value="1"/>
</dbReference>
<dbReference type="InterPro" id="IPR012805">
    <property type="entry name" value="FadA"/>
</dbReference>
<dbReference type="InterPro" id="IPR002155">
    <property type="entry name" value="Thiolase"/>
</dbReference>
<dbReference type="InterPro" id="IPR016039">
    <property type="entry name" value="Thiolase-like"/>
</dbReference>
<dbReference type="InterPro" id="IPR050215">
    <property type="entry name" value="Thiolase-like_sf_Thiolase"/>
</dbReference>
<dbReference type="InterPro" id="IPR020615">
    <property type="entry name" value="Thiolase_acyl_enz_int_AS"/>
</dbReference>
<dbReference type="InterPro" id="IPR020610">
    <property type="entry name" value="Thiolase_AS"/>
</dbReference>
<dbReference type="InterPro" id="IPR020617">
    <property type="entry name" value="Thiolase_C"/>
</dbReference>
<dbReference type="InterPro" id="IPR020613">
    <property type="entry name" value="Thiolase_CS"/>
</dbReference>
<dbReference type="InterPro" id="IPR020616">
    <property type="entry name" value="Thiolase_N"/>
</dbReference>
<dbReference type="NCBIfam" id="TIGR01930">
    <property type="entry name" value="AcCoA-C-Actrans"/>
    <property type="match status" value="1"/>
</dbReference>
<dbReference type="NCBIfam" id="TIGR02445">
    <property type="entry name" value="fadA"/>
    <property type="match status" value="1"/>
</dbReference>
<dbReference type="NCBIfam" id="NF006510">
    <property type="entry name" value="PRK08947.1"/>
    <property type="match status" value="1"/>
</dbReference>
<dbReference type="PANTHER" id="PTHR43853:SF11">
    <property type="entry name" value="3-KETOACYL-COA THIOLASE FADA"/>
    <property type="match status" value="1"/>
</dbReference>
<dbReference type="PANTHER" id="PTHR43853">
    <property type="entry name" value="3-KETOACYL-COA THIOLASE, PEROXISOMAL"/>
    <property type="match status" value="1"/>
</dbReference>
<dbReference type="Pfam" id="PF02803">
    <property type="entry name" value="Thiolase_C"/>
    <property type="match status" value="1"/>
</dbReference>
<dbReference type="Pfam" id="PF00108">
    <property type="entry name" value="Thiolase_N"/>
    <property type="match status" value="1"/>
</dbReference>
<dbReference type="PIRSF" id="PIRSF000429">
    <property type="entry name" value="Ac-CoA_Ac_transf"/>
    <property type="match status" value="1"/>
</dbReference>
<dbReference type="SUPFAM" id="SSF53901">
    <property type="entry name" value="Thiolase-like"/>
    <property type="match status" value="2"/>
</dbReference>
<dbReference type="PROSITE" id="PS00098">
    <property type="entry name" value="THIOLASE_1"/>
    <property type="match status" value="1"/>
</dbReference>
<dbReference type="PROSITE" id="PS00737">
    <property type="entry name" value="THIOLASE_2"/>
    <property type="match status" value="1"/>
</dbReference>
<dbReference type="PROSITE" id="PS00099">
    <property type="entry name" value="THIOLASE_3"/>
    <property type="match status" value="1"/>
</dbReference>
<evidence type="ECO:0000255" key="1">
    <source>
        <dbReference type="HAMAP-Rule" id="MF_01620"/>
    </source>
</evidence>
<sequence length="390" mass="41088">MATLNPRDVVIVDGVRSAMGKSKNGMFRNVRADSLSAELVRALVARNQFDVNEVEDLIWGCVNQTLEQGMNIGRNIGLLAGLPKTVAGQTVNRLCGSSMQAIHTAAAQIATNQGDIFIIGGVEHMGHVGMMHGIDLNPEASKHYAKASNMMGLTAEMLGRMNGITREEQDAFGVESHRRAWAATQEGRFKNEIIGVEGHDANGFKILCDIDEVIRPDANLEAFKALKPVFDPKGGSVTAATSSALSDGASAMLLMSAERAQALGLKPRAVIRSMAVAGCDAAIMGYGPVPATQKALKRAGLSIADIQTVELNEAFAAQGLSVLKGLGLYDKQDIVNLNGGAIALGHPLGCSGARITTTLLNVMEQQDTQIGLATMCIGLGQGIATVIERV</sequence>
<name>FADA_ACIBY</name>
<keyword id="KW-0012">Acyltransferase</keyword>
<keyword id="KW-0963">Cytoplasm</keyword>
<keyword id="KW-0276">Fatty acid metabolism</keyword>
<keyword id="KW-0442">Lipid degradation</keyword>
<keyword id="KW-0443">Lipid metabolism</keyword>
<keyword id="KW-0808">Transferase</keyword>
<comment type="function">
    <text evidence="1">Catalyzes the final step of fatty acid oxidation in which acetyl-CoA is released and the CoA ester of a fatty acid two carbons shorter is formed.</text>
</comment>
<comment type="catalytic activity">
    <reaction evidence="1">
        <text>an acyl-CoA + acetyl-CoA = a 3-oxoacyl-CoA + CoA</text>
        <dbReference type="Rhea" id="RHEA:21564"/>
        <dbReference type="ChEBI" id="CHEBI:57287"/>
        <dbReference type="ChEBI" id="CHEBI:57288"/>
        <dbReference type="ChEBI" id="CHEBI:58342"/>
        <dbReference type="ChEBI" id="CHEBI:90726"/>
        <dbReference type="EC" id="2.3.1.16"/>
    </reaction>
</comment>
<comment type="pathway">
    <text evidence="1">Lipid metabolism; fatty acid beta-oxidation.</text>
</comment>
<comment type="subunit">
    <text evidence="1">Heterotetramer of two alpha chains (FadB) and two beta chains (FadA).</text>
</comment>
<comment type="subcellular location">
    <subcellularLocation>
        <location evidence="1">Cytoplasm</location>
    </subcellularLocation>
</comment>
<comment type="similarity">
    <text evidence="1">Belongs to the thiolase-like superfamily. Thiolase family.</text>
</comment>